<evidence type="ECO:0000255" key="1">
    <source>
        <dbReference type="HAMAP-Rule" id="MF_00759"/>
    </source>
</evidence>
<feature type="chain" id="PRO_1000133467" description="DNA mismatch repair protein MutH">
    <location>
        <begin position="1"/>
        <end position="229"/>
    </location>
</feature>
<accession>B1LR29</accession>
<keyword id="KW-0963">Cytoplasm</keyword>
<keyword id="KW-0227">DNA damage</keyword>
<keyword id="KW-0234">DNA repair</keyword>
<keyword id="KW-0255">Endonuclease</keyword>
<keyword id="KW-0378">Hydrolase</keyword>
<keyword id="KW-0540">Nuclease</keyword>
<name>MUTH_ECOSM</name>
<comment type="function">
    <text evidence="1">Sequence-specific endonuclease that cleaves unmethylated GATC sequences. It is involved in DNA mismatch repair.</text>
</comment>
<comment type="subcellular location">
    <subcellularLocation>
        <location evidence="1">Cytoplasm</location>
    </subcellularLocation>
</comment>
<comment type="similarity">
    <text evidence="1">Belongs to the MutH family.</text>
</comment>
<organism>
    <name type="scientific">Escherichia coli (strain SMS-3-5 / SECEC)</name>
    <dbReference type="NCBI Taxonomy" id="439855"/>
    <lineage>
        <taxon>Bacteria</taxon>
        <taxon>Pseudomonadati</taxon>
        <taxon>Pseudomonadota</taxon>
        <taxon>Gammaproteobacteria</taxon>
        <taxon>Enterobacterales</taxon>
        <taxon>Enterobacteriaceae</taxon>
        <taxon>Escherichia</taxon>
    </lineage>
</organism>
<reference key="1">
    <citation type="journal article" date="2008" name="J. Bacteriol.">
        <title>Insights into the environmental resistance gene pool from the genome sequence of the multidrug-resistant environmental isolate Escherichia coli SMS-3-5.</title>
        <authorList>
            <person name="Fricke W.F."/>
            <person name="Wright M.S."/>
            <person name="Lindell A.H."/>
            <person name="Harkins D.M."/>
            <person name="Baker-Austin C."/>
            <person name="Ravel J."/>
            <person name="Stepanauskas R."/>
        </authorList>
    </citation>
    <scope>NUCLEOTIDE SEQUENCE [LARGE SCALE GENOMIC DNA]</scope>
    <source>
        <strain>SMS-3-5 / SECEC</strain>
    </source>
</reference>
<sequence length="229" mass="25527">MSQPRPLLSPPETEEQLLAQAQQLSGYTLGELAALAGLVTPENLKRDKGWIGVLLEIWLGASAGSKPEQDFAALGVELKTIPVDSLGRPLETTFVCVAPLTGNSGVTWETSHVRHKLKRVLWIPVEGERSIPLAQRRVGSPLLWSPNEEEDRQLREDWEELMDMIVLGQVERITARHGEYLQIRPKAANAKALTEAIGVRGERILTLPRGFYLKKNFTSALLARHFLIQ</sequence>
<dbReference type="EMBL" id="CP000970">
    <property type="protein sequence ID" value="ACB16837.1"/>
    <property type="molecule type" value="Genomic_DNA"/>
</dbReference>
<dbReference type="RefSeq" id="WP_000082192.1">
    <property type="nucleotide sequence ID" value="NC_010498.1"/>
</dbReference>
<dbReference type="SMR" id="B1LR29"/>
<dbReference type="KEGG" id="ecm:EcSMS35_2979"/>
<dbReference type="HOGENOM" id="CLU_086669_0_0_6"/>
<dbReference type="Proteomes" id="UP000007011">
    <property type="component" value="Chromosome"/>
</dbReference>
<dbReference type="GO" id="GO:0005737">
    <property type="term" value="C:cytoplasm"/>
    <property type="evidence" value="ECO:0007669"/>
    <property type="project" value="UniProtKB-SubCell"/>
</dbReference>
<dbReference type="GO" id="GO:0003677">
    <property type="term" value="F:DNA binding"/>
    <property type="evidence" value="ECO:0007669"/>
    <property type="project" value="InterPro"/>
</dbReference>
<dbReference type="GO" id="GO:0004519">
    <property type="term" value="F:endonuclease activity"/>
    <property type="evidence" value="ECO:0007669"/>
    <property type="project" value="UniProtKB-UniRule"/>
</dbReference>
<dbReference type="GO" id="GO:0006304">
    <property type="term" value="P:DNA modification"/>
    <property type="evidence" value="ECO:0007669"/>
    <property type="project" value="InterPro"/>
</dbReference>
<dbReference type="GO" id="GO:0006298">
    <property type="term" value="P:mismatch repair"/>
    <property type="evidence" value="ECO:0007669"/>
    <property type="project" value="UniProtKB-UniRule"/>
</dbReference>
<dbReference type="CDD" id="cd00583">
    <property type="entry name" value="MutH-like"/>
    <property type="match status" value="1"/>
</dbReference>
<dbReference type="FunFam" id="3.40.600.10:FF:000001">
    <property type="entry name" value="DNA mismatch repair protein MutH"/>
    <property type="match status" value="1"/>
</dbReference>
<dbReference type="Gene3D" id="3.40.600.10">
    <property type="entry name" value="DNA mismatch repair MutH/Restriction endonuclease, type II"/>
    <property type="match status" value="1"/>
</dbReference>
<dbReference type="HAMAP" id="MF_00759">
    <property type="entry name" value="MutH"/>
    <property type="match status" value="1"/>
</dbReference>
<dbReference type="InterPro" id="IPR004230">
    <property type="entry name" value="DNA_mismatch_repair_MutH"/>
</dbReference>
<dbReference type="InterPro" id="IPR011337">
    <property type="entry name" value="DNA_rep_MutH/RE_typeII_Sau3AI"/>
</dbReference>
<dbReference type="InterPro" id="IPR037057">
    <property type="entry name" value="DNA_rep_MutH/T2_RE_sf"/>
</dbReference>
<dbReference type="InterPro" id="IPR011335">
    <property type="entry name" value="Restrct_endonuc-II-like"/>
</dbReference>
<dbReference type="NCBIfam" id="TIGR02248">
    <property type="entry name" value="mutH_TIGR"/>
    <property type="match status" value="1"/>
</dbReference>
<dbReference type="NCBIfam" id="NF003458">
    <property type="entry name" value="PRK05070.1"/>
    <property type="match status" value="1"/>
</dbReference>
<dbReference type="Pfam" id="PF02976">
    <property type="entry name" value="MutH"/>
    <property type="match status" value="1"/>
</dbReference>
<dbReference type="SMART" id="SM00927">
    <property type="entry name" value="MutH"/>
    <property type="match status" value="1"/>
</dbReference>
<dbReference type="SUPFAM" id="SSF52980">
    <property type="entry name" value="Restriction endonuclease-like"/>
    <property type="match status" value="1"/>
</dbReference>
<protein>
    <recommendedName>
        <fullName evidence="1">DNA mismatch repair protein MutH</fullName>
    </recommendedName>
    <alternativeName>
        <fullName evidence="1">Methyl-directed mismatch repair protein</fullName>
    </alternativeName>
</protein>
<proteinExistence type="inferred from homology"/>
<gene>
    <name evidence="1" type="primary">mutH</name>
    <name type="ordered locus">EcSMS35_2979</name>
</gene>